<reference key="1">
    <citation type="journal article" date="2008" name="J. Bacteriol.">
        <title>Genome sequence of Thermofilum pendens reveals an exceptional loss of biosynthetic pathways without genome reduction.</title>
        <authorList>
            <person name="Anderson I."/>
            <person name="Rodriguez J."/>
            <person name="Susanti D."/>
            <person name="Porat I."/>
            <person name="Reich C."/>
            <person name="Ulrich L.E."/>
            <person name="Elkins J.G."/>
            <person name="Mavromatis K."/>
            <person name="Lykidis A."/>
            <person name="Kim E."/>
            <person name="Thompson L.S."/>
            <person name="Nolan M."/>
            <person name="Land M."/>
            <person name="Copeland A."/>
            <person name="Lapidus A."/>
            <person name="Lucas S."/>
            <person name="Detter C."/>
            <person name="Zhulin I.B."/>
            <person name="Olsen G.J."/>
            <person name="Whitman W."/>
            <person name="Mukhopadhyay B."/>
            <person name="Bristow J."/>
            <person name="Kyrpides N."/>
        </authorList>
    </citation>
    <scope>NUCLEOTIDE SEQUENCE [LARGE SCALE GENOMIC DNA]</scope>
    <source>
        <strain>DSM 2475 / Hrk 5</strain>
    </source>
</reference>
<feature type="chain" id="PRO_1000004125" description="Small ribosomal subunit protein eS28">
    <location>
        <begin position="1"/>
        <end position="77"/>
    </location>
</feature>
<organism>
    <name type="scientific">Thermofilum pendens (strain DSM 2475 / Hrk 5)</name>
    <dbReference type="NCBI Taxonomy" id="368408"/>
    <lineage>
        <taxon>Archaea</taxon>
        <taxon>Thermoproteota</taxon>
        <taxon>Thermoprotei</taxon>
        <taxon>Thermofilales</taxon>
        <taxon>Thermofilaceae</taxon>
        <taxon>Thermofilum</taxon>
    </lineage>
</organism>
<proteinExistence type="inferred from homology"/>
<sequence>MSSQAPADKFSDAVPAEVVQIIGRTGITGEVTQVRVRVLEGRDKGRILTRNVRGPVRVGDIVMLRETEREARKIATR</sequence>
<evidence type="ECO:0000255" key="1">
    <source>
        <dbReference type="HAMAP-Rule" id="MF_00292"/>
    </source>
</evidence>
<evidence type="ECO:0000305" key="2"/>
<name>RS28_THEPD</name>
<dbReference type="EMBL" id="CP000505">
    <property type="protein sequence ID" value="ABL77902.1"/>
    <property type="molecule type" value="Genomic_DNA"/>
</dbReference>
<dbReference type="RefSeq" id="WP_011752167.1">
    <property type="nucleotide sequence ID" value="NC_008698.1"/>
</dbReference>
<dbReference type="SMR" id="A1RXH2"/>
<dbReference type="STRING" id="368408.Tpen_0495"/>
<dbReference type="EnsemblBacteria" id="ABL77902">
    <property type="protein sequence ID" value="ABL77902"/>
    <property type="gene ID" value="Tpen_0495"/>
</dbReference>
<dbReference type="GeneID" id="4601329"/>
<dbReference type="KEGG" id="tpe:Tpen_0495"/>
<dbReference type="eggNOG" id="arCOG04314">
    <property type="taxonomic scope" value="Archaea"/>
</dbReference>
<dbReference type="HOGENOM" id="CLU_178987_2_1_2"/>
<dbReference type="OrthoDB" id="7620at2157"/>
<dbReference type="Proteomes" id="UP000000641">
    <property type="component" value="Chromosome"/>
</dbReference>
<dbReference type="GO" id="GO:0022627">
    <property type="term" value="C:cytosolic small ribosomal subunit"/>
    <property type="evidence" value="ECO:0007669"/>
    <property type="project" value="TreeGrafter"/>
</dbReference>
<dbReference type="GO" id="GO:0003735">
    <property type="term" value="F:structural constituent of ribosome"/>
    <property type="evidence" value="ECO:0007669"/>
    <property type="project" value="InterPro"/>
</dbReference>
<dbReference type="GO" id="GO:0030490">
    <property type="term" value="P:maturation of SSU-rRNA"/>
    <property type="evidence" value="ECO:0007669"/>
    <property type="project" value="TreeGrafter"/>
</dbReference>
<dbReference type="GO" id="GO:0000028">
    <property type="term" value="P:ribosomal small subunit assembly"/>
    <property type="evidence" value="ECO:0007669"/>
    <property type="project" value="TreeGrafter"/>
</dbReference>
<dbReference type="GO" id="GO:0006412">
    <property type="term" value="P:translation"/>
    <property type="evidence" value="ECO:0007669"/>
    <property type="project" value="UniProtKB-UniRule"/>
</dbReference>
<dbReference type="CDD" id="cd04457">
    <property type="entry name" value="S1_S28E"/>
    <property type="match status" value="1"/>
</dbReference>
<dbReference type="FunFam" id="2.40.50.140:FF:000145">
    <property type="entry name" value="30S ribosomal protein S28e"/>
    <property type="match status" value="1"/>
</dbReference>
<dbReference type="Gene3D" id="2.40.50.140">
    <property type="entry name" value="Nucleic acid-binding proteins"/>
    <property type="match status" value="1"/>
</dbReference>
<dbReference type="HAMAP" id="MF_00292">
    <property type="entry name" value="Ribosomal_eS28"/>
    <property type="match status" value="1"/>
</dbReference>
<dbReference type="InterPro" id="IPR012340">
    <property type="entry name" value="NA-bd_OB-fold"/>
</dbReference>
<dbReference type="InterPro" id="IPR000289">
    <property type="entry name" value="Ribosomal_eS28"/>
</dbReference>
<dbReference type="InterPro" id="IPR028626">
    <property type="entry name" value="Ribosomal_eS28_CS"/>
</dbReference>
<dbReference type="NCBIfam" id="NF003080">
    <property type="entry name" value="PRK04007.1"/>
    <property type="match status" value="1"/>
</dbReference>
<dbReference type="PANTHER" id="PTHR10769">
    <property type="entry name" value="40S RIBOSOMAL PROTEIN S28"/>
    <property type="match status" value="1"/>
</dbReference>
<dbReference type="PANTHER" id="PTHR10769:SF3">
    <property type="entry name" value="SMALL RIBOSOMAL SUBUNIT PROTEIN ES28"/>
    <property type="match status" value="1"/>
</dbReference>
<dbReference type="Pfam" id="PF01200">
    <property type="entry name" value="Ribosomal_S28e"/>
    <property type="match status" value="1"/>
</dbReference>
<dbReference type="SUPFAM" id="SSF50249">
    <property type="entry name" value="Nucleic acid-binding proteins"/>
    <property type="match status" value="1"/>
</dbReference>
<dbReference type="PROSITE" id="PS00961">
    <property type="entry name" value="RIBOSOMAL_S28E"/>
    <property type="match status" value="1"/>
</dbReference>
<keyword id="KW-1185">Reference proteome</keyword>
<keyword id="KW-0687">Ribonucleoprotein</keyword>
<keyword id="KW-0689">Ribosomal protein</keyword>
<comment type="similarity">
    <text evidence="1">Belongs to the eukaryotic ribosomal protein eS28 family.</text>
</comment>
<gene>
    <name evidence="1" type="primary">rps28e</name>
    <name type="ordered locus">Tpen_0495</name>
</gene>
<protein>
    <recommendedName>
        <fullName evidence="1">Small ribosomal subunit protein eS28</fullName>
    </recommendedName>
    <alternativeName>
        <fullName evidence="2">30S ribosomal protein S28e</fullName>
    </alternativeName>
</protein>
<accession>A1RXH2</accession>